<protein>
    <recommendedName>
        <fullName evidence="1">Holo-[acyl-carrier-protein] synthase</fullName>
        <shortName evidence="1">Holo-ACP synthase</shortName>
        <ecNumber evidence="1">2.7.8.7</ecNumber>
    </recommendedName>
    <alternativeName>
        <fullName evidence="1">4'-phosphopantetheinyl transferase AcpS</fullName>
    </alternativeName>
</protein>
<comment type="function">
    <text evidence="1">Transfers the 4'-phosphopantetheine moiety from coenzyme A to a Ser of acyl-carrier-protein.</text>
</comment>
<comment type="catalytic activity">
    <reaction evidence="1">
        <text>apo-[ACP] + CoA = holo-[ACP] + adenosine 3',5'-bisphosphate + H(+)</text>
        <dbReference type="Rhea" id="RHEA:12068"/>
        <dbReference type="Rhea" id="RHEA-COMP:9685"/>
        <dbReference type="Rhea" id="RHEA-COMP:9690"/>
        <dbReference type="ChEBI" id="CHEBI:15378"/>
        <dbReference type="ChEBI" id="CHEBI:29999"/>
        <dbReference type="ChEBI" id="CHEBI:57287"/>
        <dbReference type="ChEBI" id="CHEBI:58343"/>
        <dbReference type="ChEBI" id="CHEBI:64479"/>
        <dbReference type="EC" id="2.7.8.7"/>
    </reaction>
</comment>
<comment type="cofactor">
    <cofactor evidence="1">
        <name>Mg(2+)</name>
        <dbReference type="ChEBI" id="CHEBI:18420"/>
    </cofactor>
</comment>
<comment type="subcellular location">
    <subcellularLocation>
        <location evidence="1">Cytoplasm</location>
    </subcellularLocation>
</comment>
<comment type="similarity">
    <text evidence="1">Belongs to the P-Pant transferase superfamily. AcpS family.</text>
</comment>
<gene>
    <name evidence="1" type="primary">acpS</name>
    <name type="ordered locus">RHE_CH01388</name>
</gene>
<name>ACPS_RHIEC</name>
<accession>Q2KAE5</accession>
<organism>
    <name type="scientific">Rhizobium etli (strain ATCC 51251 / DSM 11541 / JCM 21823 / NBRC 15573 / CFN 42)</name>
    <dbReference type="NCBI Taxonomy" id="347834"/>
    <lineage>
        <taxon>Bacteria</taxon>
        <taxon>Pseudomonadati</taxon>
        <taxon>Pseudomonadota</taxon>
        <taxon>Alphaproteobacteria</taxon>
        <taxon>Hyphomicrobiales</taxon>
        <taxon>Rhizobiaceae</taxon>
        <taxon>Rhizobium/Agrobacterium group</taxon>
        <taxon>Rhizobium</taxon>
    </lineage>
</organism>
<proteinExistence type="inferred from homology"/>
<sequence length="134" mass="14639">MIIGIGSDLIDIRRVEKSIERFGERFTHRCFTEVERARSDRRANRAASYAKRFAAKEACSKALGTGIAQGVFWKDMGVVNLPSGKPTMQLTGTAAVLLEAILPAGHRAAIHLTITDDYPLAQAFVIIEALPESP</sequence>
<evidence type="ECO:0000255" key="1">
    <source>
        <dbReference type="HAMAP-Rule" id="MF_00101"/>
    </source>
</evidence>
<reference key="1">
    <citation type="journal article" date="2006" name="Proc. Natl. Acad. Sci. U.S.A.">
        <title>The partitioned Rhizobium etli genome: genetic and metabolic redundancy in seven interacting replicons.</title>
        <authorList>
            <person name="Gonzalez V."/>
            <person name="Santamaria R.I."/>
            <person name="Bustos P."/>
            <person name="Hernandez-Gonzalez I."/>
            <person name="Medrano-Soto A."/>
            <person name="Moreno-Hagelsieb G."/>
            <person name="Janga S.C."/>
            <person name="Ramirez M.A."/>
            <person name="Jimenez-Jacinto V."/>
            <person name="Collado-Vides J."/>
            <person name="Davila G."/>
        </authorList>
    </citation>
    <scope>NUCLEOTIDE SEQUENCE [LARGE SCALE GENOMIC DNA]</scope>
    <source>
        <strain>ATCC 51251 / DSM 11541 / JCM 21823 / NBRC 15573 / CFN 42</strain>
    </source>
</reference>
<feature type="chain" id="PRO_1000008475" description="Holo-[acyl-carrier-protein] synthase">
    <location>
        <begin position="1"/>
        <end position="134"/>
    </location>
</feature>
<feature type="binding site" evidence="1">
    <location>
        <position position="8"/>
    </location>
    <ligand>
        <name>Mg(2+)</name>
        <dbReference type="ChEBI" id="CHEBI:18420"/>
    </ligand>
</feature>
<feature type="binding site" evidence="1">
    <location>
        <position position="57"/>
    </location>
    <ligand>
        <name>Mg(2+)</name>
        <dbReference type="ChEBI" id="CHEBI:18420"/>
    </ligand>
</feature>
<keyword id="KW-0963">Cytoplasm</keyword>
<keyword id="KW-0275">Fatty acid biosynthesis</keyword>
<keyword id="KW-0276">Fatty acid metabolism</keyword>
<keyword id="KW-0444">Lipid biosynthesis</keyword>
<keyword id="KW-0443">Lipid metabolism</keyword>
<keyword id="KW-0460">Magnesium</keyword>
<keyword id="KW-0479">Metal-binding</keyword>
<keyword id="KW-1185">Reference proteome</keyword>
<keyword id="KW-0808">Transferase</keyword>
<dbReference type="EC" id="2.7.8.7" evidence="1"/>
<dbReference type="EMBL" id="CP000133">
    <property type="protein sequence ID" value="ABC90191.1"/>
    <property type="molecule type" value="Genomic_DNA"/>
</dbReference>
<dbReference type="RefSeq" id="WP_011424723.1">
    <property type="nucleotide sequence ID" value="NC_007761.1"/>
</dbReference>
<dbReference type="SMR" id="Q2KAE5"/>
<dbReference type="KEGG" id="ret:RHE_CH01388"/>
<dbReference type="eggNOG" id="COG0736">
    <property type="taxonomic scope" value="Bacteria"/>
</dbReference>
<dbReference type="HOGENOM" id="CLU_089696_0_2_5"/>
<dbReference type="OrthoDB" id="517356at2"/>
<dbReference type="Proteomes" id="UP000001936">
    <property type="component" value="Chromosome"/>
</dbReference>
<dbReference type="GO" id="GO:0005737">
    <property type="term" value="C:cytoplasm"/>
    <property type="evidence" value="ECO:0007669"/>
    <property type="project" value="UniProtKB-SubCell"/>
</dbReference>
<dbReference type="GO" id="GO:0008897">
    <property type="term" value="F:holo-[acyl-carrier-protein] synthase activity"/>
    <property type="evidence" value="ECO:0007669"/>
    <property type="project" value="UniProtKB-UniRule"/>
</dbReference>
<dbReference type="GO" id="GO:0000287">
    <property type="term" value="F:magnesium ion binding"/>
    <property type="evidence" value="ECO:0007669"/>
    <property type="project" value="UniProtKB-UniRule"/>
</dbReference>
<dbReference type="GO" id="GO:0006633">
    <property type="term" value="P:fatty acid biosynthetic process"/>
    <property type="evidence" value="ECO:0007669"/>
    <property type="project" value="UniProtKB-UniRule"/>
</dbReference>
<dbReference type="Gene3D" id="3.90.470.20">
    <property type="entry name" value="4'-phosphopantetheinyl transferase domain"/>
    <property type="match status" value="1"/>
</dbReference>
<dbReference type="HAMAP" id="MF_00101">
    <property type="entry name" value="AcpS"/>
    <property type="match status" value="1"/>
</dbReference>
<dbReference type="InterPro" id="IPR008278">
    <property type="entry name" value="4-PPantetheinyl_Trfase_dom"/>
</dbReference>
<dbReference type="InterPro" id="IPR037143">
    <property type="entry name" value="4-PPantetheinyl_Trfase_dom_sf"/>
</dbReference>
<dbReference type="InterPro" id="IPR002582">
    <property type="entry name" value="ACPS"/>
</dbReference>
<dbReference type="InterPro" id="IPR004568">
    <property type="entry name" value="Ppantetheine-prot_Trfase_dom"/>
</dbReference>
<dbReference type="NCBIfam" id="TIGR00516">
    <property type="entry name" value="acpS"/>
    <property type="match status" value="1"/>
</dbReference>
<dbReference type="NCBIfam" id="TIGR00556">
    <property type="entry name" value="pantethn_trn"/>
    <property type="match status" value="1"/>
</dbReference>
<dbReference type="Pfam" id="PF01648">
    <property type="entry name" value="ACPS"/>
    <property type="match status" value="1"/>
</dbReference>
<dbReference type="SUPFAM" id="SSF56214">
    <property type="entry name" value="4'-phosphopantetheinyl transferase"/>
    <property type="match status" value="1"/>
</dbReference>